<gene>
    <name type="primary">pad-1</name>
    <name type="ORF">Y18D10A.13</name>
</gene>
<reference key="1">
    <citation type="journal article" date="2000" name="Genomics">
        <title>C21orf5, a novel human chromosome 21 gene, has a Caenorhabditis elegans ortholog (pad-1) required for embryonic patterning.</title>
        <authorList>
            <person name="Guipponi M."/>
            <person name="Brunschwig K."/>
            <person name="Chamoun Z."/>
            <person name="Scott H.S."/>
            <person name="Shibuya K."/>
            <person name="Kudoh J."/>
            <person name="Delezoide A.-L."/>
            <person name="El Samadi S."/>
            <person name="Chettouh Z."/>
            <person name="Rossier C."/>
            <person name="Shimizu N."/>
            <person name="Mueller F."/>
            <person name="Delabar J.-M."/>
            <person name="Antonarakis S.E."/>
        </authorList>
    </citation>
    <scope>NUCLEOTIDE SEQUENCE [MRNA]</scope>
    <scope>FUNCTION</scope>
</reference>
<reference key="2">
    <citation type="journal article" date="1998" name="Science">
        <title>Genome sequence of the nematode C. elegans: a platform for investigating biology.</title>
        <authorList>
            <consortium name="The C. elegans sequencing consortium"/>
        </authorList>
    </citation>
    <scope>NUCLEOTIDE SEQUENCE [LARGE SCALE GENOMIC DNA]</scope>
    <source>
        <strain>Bristol N2</strain>
    </source>
</reference>
<feature type="chain" id="PRO_0000297952" description="Protein pad-1">
    <location>
        <begin position="1"/>
        <end position="2417"/>
    </location>
</feature>
<feature type="region of interest" description="Disordered" evidence="2">
    <location>
        <begin position="409"/>
        <end position="437"/>
    </location>
</feature>
<feature type="region of interest" description="Disordered" evidence="2">
    <location>
        <begin position="449"/>
        <end position="475"/>
    </location>
</feature>
<feature type="region of interest" description="Disordered" evidence="2">
    <location>
        <begin position="994"/>
        <end position="1029"/>
    </location>
</feature>
<feature type="region of interest" description="Disordered" evidence="2">
    <location>
        <begin position="1957"/>
        <end position="2032"/>
    </location>
</feature>
<feature type="compositionally biased region" description="Low complexity" evidence="2">
    <location>
        <begin position="456"/>
        <end position="468"/>
    </location>
</feature>
<feature type="compositionally biased region" description="Low complexity" evidence="2">
    <location>
        <begin position="1002"/>
        <end position="1024"/>
    </location>
</feature>
<feature type="compositionally biased region" description="Polar residues" evidence="2">
    <location>
        <begin position="1969"/>
        <end position="1982"/>
    </location>
</feature>
<feature type="compositionally biased region" description="Basic and acidic residues" evidence="2">
    <location>
        <begin position="2003"/>
        <end position="2014"/>
    </location>
</feature>
<feature type="compositionally biased region" description="Polar residues" evidence="2">
    <location>
        <begin position="2015"/>
        <end position="2025"/>
    </location>
</feature>
<feature type="sequence conflict" description="In Ref. 1; CAB59919." evidence="4" ref="1">
    <original>FLWT</original>
    <variation>SWGK</variation>
    <location>
        <begin position="501"/>
        <end position="504"/>
    </location>
</feature>
<feature type="sequence conflict" description="In Ref. 1; CAB59919." evidence="4" ref="1">
    <original>DWY</original>
    <variation>NGN</variation>
    <location>
        <begin position="508"/>
        <end position="510"/>
    </location>
</feature>
<feature type="sequence conflict" description="In Ref. 1; CAB59919." evidence="4" ref="1">
    <original>V</original>
    <variation>G</variation>
    <location>
        <position position="738"/>
    </location>
</feature>
<feature type="sequence conflict" description="In Ref. 1; CAB59919." evidence="4" ref="1">
    <original>S</original>
    <variation>P</variation>
    <location>
        <position position="2100"/>
    </location>
</feature>
<proteinExistence type="evidence at transcript level"/>
<name>PAD1_CAEEL</name>
<evidence type="ECO:0000250" key="1"/>
<evidence type="ECO:0000256" key="2">
    <source>
        <dbReference type="SAM" id="MobiDB-lite"/>
    </source>
</evidence>
<evidence type="ECO:0000269" key="3">
    <source>
    </source>
</evidence>
<evidence type="ECO:0000305" key="4"/>
<protein>
    <recommendedName>
        <fullName>Protein pad-1</fullName>
    </recommendedName>
    <alternativeName>
        <fullName>Patterning defective protein 1</fullName>
    </alternativeName>
</protein>
<accession>Q9XW10</accession>
<accession>Q9U5Z2</accession>
<keyword id="KW-0217">Developmental protein</keyword>
<keyword id="KW-0653">Protein transport</keyword>
<keyword id="KW-1185">Reference proteome</keyword>
<keyword id="KW-0813">Transport</keyword>
<organism>
    <name type="scientific">Caenorhabditis elegans</name>
    <dbReference type="NCBI Taxonomy" id="6239"/>
    <lineage>
        <taxon>Eukaryota</taxon>
        <taxon>Metazoa</taxon>
        <taxon>Ecdysozoa</taxon>
        <taxon>Nematoda</taxon>
        <taxon>Chromadorea</taxon>
        <taxon>Rhabditida</taxon>
        <taxon>Rhabditina</taxon>
        <taxon>Rhabditomorpha</taxon>
        <taxon>Rhabditoidea</taxon>
        <taxon>Rhabditidae</taxon>
        <taxon>Peloderinae</taxon>
        <taxon>Caenorhabditis</taxon>
    </lineage>
</organism>
<comment type="function">
    <text evidence="1 3">May be involved in protein traffic between late Golgi and early endosomes (By similarity). Essential for cell patterning during gastrulation.</text>
</comment>
<comment type="similarity">
    <text evidence="4">Belongs to the DOP1 family.</text>
</comment>
<sequence length="2417" mass="267153">MASASGGDVPAGREKDSKYRAYAKAIDQALKTFETPNEWADLISALGKLAKVFQSNAKFCAIPNRVTVAKRLSQCLHPALPMGVHLKALETYRQIFEILGPNKLPECLYLFAVGLFPLMDHCGIKVKSELFTIFENYLVPLGANLRPALPGFLGGVLLALEEGTEFYERSFILLDRVCEKVGPRAFYACLWQAILGSPPVRLPAMIYVNAKFDKLKSLDDQIHLVGDHVNHMVAALCAVADDTGSPLVQRYLLDFLVAAFPLDSTNLTNEDFVQLLRRCLFVVLRRDMSLNRRLYTWLINRSGETKGVSGLSLGGPDDGIELTFFKERVLGLVHGALGEYLALDTIETPFANHQNSMWGDRKEAEQVQFAEVRVCRLLLYLQDRADIGRTILETVFADFLKKSAEFHSSSNSSSLKKSPRKIQQSLKNPRKPGDREGLYLDLNSVCSTSNKDDDVTSVTSSAAANASSAPPPDEEDLVQARRIDELSKTFNMLLNSLEPGFLWTFLGDWYRRIVENNEFERQIHDFSQVVSVCLEMCNVESDPTIRTQHLPRLLETVLEGVSNKNLLSSCDQSDLLQLYTVCQKLLEISTAHPPSPIEVDEIAEDSLSMSQEVTAIEHERSQTDACLSQCLSALSAIFEIYTTRREASLIPLIDASTTLLNAFLEVPIYYLGFGIVDNPGDYCRESSEEVQPWLKNMLKVIDGPGWLREMRAGLCADVSARASLLELLCKIYVKSVQVLEQHEEAAHRPHDDFYDEMTHVLLKPLLAKRDCQFIEQGKVFGTCGEAVWLGIGSRKFCTEQQRLARLLVELHSRRPLEASSDVESIVVQSLTSTDDLVCSEAARTFHRIWVLARNLEDREQQGIPYQKPFNRAVMILLGVLADESVAKTRTELKAAAAEWFHDCSKHQDLPRIVQMLSTMLMNPVTARISIQYIRQETKMTTDTCPVIPADISAVTLVTIDGKQRLYHVTGQPAIDSSSTESTWITEVRNRLLRTSTGEDSGDPSAAGAAGILRSSSPDPDVVPAFDDDTDSLDTLSMSDSIDETVIHVLREIVDQVCEEFNEEDLERERIMTMFAMDNVEPTGASFNLPHDSEADDEVAERPAPICPDSLVQRVKKGHRRQDSLQESIFNMTDKDLSAFDTSEIFRPSTESVSRGTGAGAAAAAAAAGASSKDTILPGTVSSASSTSSAAGGTSSLFEEMHTHMLLYGESGKVVDLARAETAFRILTALLAPRGATGNRMLLNCLVSSGTTTTSDSSAEHSLVELMNRHVRAILGQHFWSAPASDEEKHKHITLLELLITISLHFLRSYFLNSPISPVTEADLTSLWKCKISALEFLCELFRELSAMLNEHESKQFVQFVQTILNRSKLQKCILHLLLTAVDHNPMESSSSKKTGGGGGPLSVSISKFNEGLLGESRRLSPLLAAYHRSLLTFTSHAIRLECDIKRGFATFSDANSSHRFSIIQSVMNQSFNNRTSRVDNHASTVELRAFLLILLNALKKQPHRHEMWLQFVVQILPWVERSLATIVCRVVEQLCKNMENAMSVAYENPPTSDVVVDSPGDVRDEPDCYPANYLAMTMELLTTLVHFCVIDSVPTSAVAGGAPGVGGAGGVTSSSGGVQQVIHENATPTPSSTSMVGHAMSVIPGSKVATELFSQLGKVFSMSGDSGGVISKLDSSRQHGNGWRQAQSDMLSSLPHSLATICNVWTVVRRAQPPIVPIGTNSQLRRLVLHLLSPIAQYHKHAFLTSLALVWLTRSTAKPTVTLRKQDPDRATFEYSSAQLDITNLLLSLQVIPFEDLISSVNSTLREASFKANKVGITTIDKANFPTEEPLLELVHSCVSAVLQTQLRLCWSSLLSLFSEAPLSALSARAVFLLFVILSDFVKCVGGAYIVEDKAMYRNVQEVCSRLAEAVNAIVGWQLETTTWLKRTLVVKQDHGSSISSSIRSVDQSPIIEIQSSMSNVSGGGGSLDNPSGSTRNSTLSLINKPGGSIGTGSSVTSTLVDSKSENMKIEKKSSSNLRASIKDTNNNRRDPAHSTQALFLLAERLTDLLDSVSKSDEKDKVLPTLQAVWANVVPYLKAKNARNARFFLASSQLLASMSSYSYMRPVWKKTTLDLLLDSGFFKMDHSALKQWLVVTDHLMTHDRTSFKDLLKSISYSPNTSFSIMTSKEQEYEARAQALKRLTFVVFGSQLDQYHGQMNDIQERLSDNLRVSQSPVIRSAVFLCIRVLLLRLRPHSLIGVWPIMVTELVHALSQLEQQLQSGEQDSGATAASSDQWMQLYVAACKLLETLCTLPAGYLSHFQMFHWAFVSSVSADKTEIFKPFAERINDLLAKKYGELLTPETMSNHTASLGAVKILTSFEELRPFFYTLANLNKSVPESNNTLRDAHALSGSLTYKNAVARLESALYVDFSEHLQF</sequence>
<dbReference type="EMBL" id="AJ250261">
    <property type="protein sequence ID" value="CAB59919.1"/>
    <property type="molecule type" value="mRNA"/>
</dbReference>
<dbReference type="EMBL" id="AL034393">
    <property type="protein sequence ID" value="CAA22324.2"/>
    <property type="molecule type" value="Genomic_DNA"/>
</dbReference>
<dbReference type="PIR" id="T26533">
    <property type="entry name" value="T26533"/>
</dbReference>
<dbReference type="RefSeq" id="NP_493252.3">
    <property type="nucleotide sequence ID" value="NM_060851.4"/>
</dbReference>
<dbReference type="BioGRID" id="38553">
    <property type="interactions" value="4"/>
</dbReference>
<dbReference type="FunCoup" id="Q9XW10">
    <property type="interactions" value="2256"/>
</dbReference>
<dbReference type="STRING" id="6239.Y18D10A.13.2"/>
<dbReference type="PaxDb" id="6239-Y18D10A.13"/>
<dbReference type="PeptideAtlas" id="Q9XW10"/>
<dbReference type="EnsemblMetazoa" id="Y18D10A.13.1">
    <property type="protein sequence ID" value="Y18D10A.13.1"/>
    <property type="gene ID" value="WBGene00003905"/>
</dbReference>
<dbReference type="GeneID" id="173156"/>
<dbReference type="KEGG" id="cel:CELE_Y18D10A.13"/>
<dbReference type="UCSC" id="Y18D10A.13">
    <property type="organism name" value="c. elegans"/>
</dbReference>
<dbReference type="AGR" id="WB:WBGene00003905"/>
<dbReference type="CTD" id="173156"/>
<dbReference type="WormBase" id="Y18D10A.13">
    <property type="protein sequence ID" value="CE27468"/>
    <property type="gene ID" value="WBGene00003905"/>
    <property type="gene designation" value="pad-1"/>
</dbReference>
<dbReference type="eggNOG" id="KOG3613">
    <property type="taxonomic scope" value="Eukaryota"/>
</dbReference>
<dbReference type="GeneTree" id="ENSGT00390000016421"/>
<dbReference type="HOGENOM" id="CLU_001045_0_0_1"/>
<dbReference type="InParanoid" id="Q9XW10"/>
<dbReference type="OMA" id="DINRALY"/>
<dbReference type="OrthoDB" id="297643at2759"/>
<dbReference type="PhylomeDB" id="Q9XW10"/>
<dbReference type="PRO" id="PR:Q9XW10"/>
<dbReference type="Proteomes" id="UP000001940">
    <property type="component" value="Chromosome I"/>
</dbReference>
<dbReference type="Bgee" id="WBGene00003905">
    <property type="expression patterns" value="Expressed in pharyngeal muscle cell (C elegans) and 4 other cell types or tissues"/>
</dbReference>
<dbReference type="GO" id="GO:0005829">
    <property type="term" value="C:cytosol"/>
    <property type="evidence" value="ECO:0007669"/>
    <property type="project" value="GOC"/>
</dbReference>
<dbReference type="GO" id="GO:0005768">
    <property type="term" value="C:endosome"/>
    <property type="evidence" value="ECO:0000318"/>
    <property type="project" value="GO_Central"/>
</dbReference>
<dbReference type="GO" id="GO:0005802">
    <property type="term" value="C:trans-Golgi network"/>
    <property type="evidence" value="ECO:0000318"/>
    <property type="project" value="GO_Central"/>
</dbReference>
<dbReference type="GO" id="GO:0006895">
    <property type="term" value="P:Golgi to endosome transport"/>
    <property type="evidence" value="ECO:0007669"/>
    <property type="project" value="InterPro"/>
</dbReference>
<dbReference type="GO" id="GO:0015031">
    <property type="term" value="P:protein transport"/>
    <property type="evidence" value="ECO:0007669"/>
    <property type="project" value="UniProtKB-KW"/>
</dbReference>
<dbReference type="InterPro" id="IPR016024">
    <property type="entry name" value="ARM-type_fold"/>
</dbReference>
<dbReference type="InterPro" id="IPR040314">
    <property type="entry name" value="DOP1"/>
</dbReference>
<dbReference type="InterPro" id="IPR056457">
    <property type="entry name" value="DOP1_C"/>
</dbReference>
<dbReference type="InterPro" id="IPR007249">
    <property type="entry name" value="DOP1_N"/>
</dbReference>
<dbReference type="InterPro" id="IPR056459">
    <property type="entry name" value="TPR_DOP1"/>
</dbReference>
<dbReference type="PANTHER" id="PTHR14042">
    <property type="entry name" value="DOPEY-RELATED"/>
    <property type="match status" value="1"/>
</dbReference>
<dbReference type="PANTHER" id="PTHR14042:SF24">
    <property type="entry name" value="PROTEIN DOPEY-1 HOMOLOG"/>
    <property type="match status" value="1"/>
</dbReference>
<dbReference type="Pfam" id="PF24598">
    <property type="entry name" value="DOP1_C"/>
    <property type="match status" value="1"/>
</dbReference>
<dbReference type="Pfam" id="PF04118">
    <property type="entry name" value="Dopey_N"/>
    <property type="match status" value="1"/>
</dbReference>
<dbReference type="Pfam" id="PF24601">
    <property type="entry name" value="TPR_DOP1"/>
    <property type="match status" value="1"/>
</dbReference>
<dbReference type="SUPFAM" id="SSF48371">
    <property type="entry name" value="ARM repeat"/>
    <property type="match status" value="2"/>
</dbReference>